<reference key="1">
    <citation type="journal article" date="2013" name="Plant Physiol.">
        <title>A Nostoc punctiforme Sugar Transporter Necessary to Establish a Cyanobacterium-Plant Symbiosis.</title>
        <authorList>
            <person name="Ekman M."/>
            <person name="Picossi S."/>
            <person name="Campbell E.L."/>
            <person name="Meeks J.C."/>
            <person name="Flores E."/>
        </authorList>
    </citation>
    <scope>NUCLEOTIDE SEQUENCE [LARGE SCALE GENOMIC DNA]</scope>
    <source>
        <strain>ATCC 29133 / PCC 73102</strain>
    </source>
</reference>
<organism>
    <name type="scientific">Nostoc punctiforme (strain ATCC 29133 / PCC 73102)</name>
    <dbReference type="NCBI Taxonomy" id="63737"/>
    <lineage>
        <taxon>Bacteria</taxon>
        <taxon>Bacillati</taxon>
        <taxon>Cyanobacteriota</taxon>
        <taxon>Cyanophyceae</taxon>
        <taxon>Nostocales</taxon>
        <taxon>Nostocaceae</taxon>
        <taxon>Nostoc</taxon>
    </lineage>
</organism>
<comment type="function">
    <text evidence="1">One of the primary rRNA binding proteins, it binds directly near the 3'-end of the 23S rRNA, where it nucleates assembly of the 50S subunit.</text>
</comment>
<comment type="subunit">
    <text evidence="1">Part of the 50S ribosomal subunit. Forms a cluster with proteins L14 and L19.</text>
</comment>
<comment type="similarity">
    <text evidence="1">Belongs to the universal ribosomal protein uL3 family.</text>
</comment>
<accession>B2ITQ5</accession>
<gene>
    <name evidence="1" type="primary">rplC</name>
    <name evidence="1" type="synonym">rpl3</name>
    <name type="ordered locus">Npun_R4390</name>
</gene>
<keyword id="KW-1185">Reference proteome</keyword>
<keyword id="KW-0687">Ribonucleoprotein</keyword>
<keyword id="KW-0689">Ribosomal protein</keyword>
<keyword id="KW-0694">RNA-binding</keyword>
<keyword id="KW-0699">rRNA-binding</keyword>
<feature type="chain" id="PRO_1000141894" description="Large ribosomal subunit protein uL3">
    <location>
        <begin position="1"/>
        <end position="210"/>
    </location>
</feature>
<feature type="region of interest" description="Disordered" evidence="2">
    <location>
        <begin position="122"/>
        <end position="155"/>
    </location>
</feature>
<proteinExistence type="inferred from homology"/>
<name>RL3_NOSP7</name>
<evidence type="ECO:0000255" key="1">
    <source>
        <dbReference type="HAMAP-Rule" id="MF_01325"/>
    </source>
</evidence>
<evidence type="ECO:0000256" key="2">
    <source>
        <dbReference type="SAM" id="MobiDB-lite"/>
    </source>
</evidence>
<evidence type="ECO:0000305" key="3"/>
<protein>
    <recommendedName>
        <fullName evidence="1">Large ribosomal subunit protein uL3</fullName>
    </recommendedName>
    <alternativeName>
        <fullName evidence="3">50S ribosomal protein L3</fullName>
    </alternativeName>
</protein>
<sequence length="210" mass="22018">MSVGILGTKLGMTQIFDEAGVAIPVTVIQAGPCTVTQVKTKQTDGYFAIQVGFGEVKPKALNRPLLGHLAKSSAPALRHLNEYHTDSSSDYALGQQIKADIFSEGQIVDVVGTSIGRGFAGNQKRNNFGRGPMSHGSKNHRAPGSIGAGTTPGRVYPGKRMAGRLGGKRITIRKLTIVRVDAERNLLLIKGAIPGKPGALVSVVPAKVVG</sequence>
<dbReference type="EMBL" id="CP001037">
    <property type="protein sequence ID" value="ACC82763.1"/>
    <property type="molecule type" value="Genomic_DNA"/>
</dbReference>
<dbReference type="RefSeq" id="WP_012410725.1">
    <property type="nucleotide sequence ID" value="NC_010628.1"/>
</dbReference>
<dbReference type="SMR" id="B2ITQ5"/>
<dbReference type="STRING" id="63737.Npun_R4390"/>
<dbReference type="EnsemblBacteria" id="ACC82763">
    <property type="protein sequence ID" value="ACC82763"/>
    <property type="gene ID" value="Npun_R4390"/>
</dbReference>
<dbReference type="KEGG" id="npu:Npun_R4390"/>
<dbReference type="eggNOG" id="COG0087">
    <property type="taxonomic scope" value="Bacteria"/>
</dbReference>
<dbReference type="HOGENOM" id="CLU_044142_4_1_3"/>
<dbReference type="OrthoDB" id="9806135at2"/>
<dbReference type="PhylomeDB" id="B2ITQ5"/>
<dbReference type="Proteomes" id="UP000001191">
    <property type="component" value="Chromosome"/>
</dbReference>
<dbReference type="GO" id="GO:0022625">
    <property type="term" value="C:cytosolic large ribosomal subunit"/>
    <property type="evidence" value="ECO:0007669"/>
    <property type="project" value="TreeGrafter"/>
</dbReference>
<dbReference type="GO" id="GO:0019843">
    <property type="term" value="F:rRNA binding"/>
    <property type="evidence" value="ECO:0007669"/>
    <property type="project" value="UniProtKB-UniRule"/>
</dbReference>
<dbReference type="GO" id="GO:0003735">
    <property type="term" value="F:structural constituent of ribosome"/>
    <property type="evidence" value="ECO:0007669"/>
    <property type="project" value="InterPro"/>
</dbReference>
<dbReference type="GO" id="GO:0006412">
    <property type="term" value="P:translation"/>
    <property type="evidence" value="ECO:0007669"/>
    <property type="project" value="UniProtKB-UniRule"/>
</dbReference>
<dbReference type="FunFam" id="3.30.160.810:FF:000001">
    <property type="entry name" value="50S ribosomal protein L3"/>
    <property type="match status" value="1"/>
</dbReference>
<dbReference type="FunFam" id="2.40.30.10:FF:000065">
    <property type="entry name" value="50S ribosomal protein L3, chloroplastic"/>
    <property type="match status" value="1"/>
</dbReference>
<dbReference type="Gene3D" id="3.30.160.810">
    <property type="match status" value="1"/>
</dbReference>
<dbReference type="Gene3D" id="2.40.30.10">
    <property type="entry name" value="Translation factors"/>
    <property type="match status" value="1"/>
</dbReference>
<dbReference type="HAMAP" id="MF_01325_B">
    <property type="entry name" value="Ribosomal_uL3_B"/>
    <property type="match status" value="1"/>
</dbReference>
<dbReference type="InterPro" id="IPR000597">
    <property type="entry name" value="Ribosomal_uL3"/>
</dbReference>
<dbReference type="InterPro" id="IPR019927">
    <property type="entry name" value="Ribosomal_uL3_bac/org-type"/>
</dbReference>
<dbReference type="InterPro" id="IPR019926">
    <property type="entry name" value="Ribosomal_uL3_CS"/>
</dbReference>
<dbReference type="InterPro" id="IPR009000">
    <property type="entry name" value="Transl_B-barrel_sf"/>
</dbReference>
<dbReference type="NCBIfam" id="TIGR03625">
    <property type="entry name" value="L3_bact"/>
    <property type="match status" value="1"/>
</dbReference>
<dbReference type="PANTHER" id="PTHR11229">
    <property type="entry name" value="50S RIBOSOMAL PROTEIN L3"/>
    <property type="match status" value="1"/>
</dbReference>
<dbReference type="PANTHER" id="PTHR11229:SF16">
    <property type="entry name" value="LARGE RIBOSOMAL SUBUNIT PROTEIN UL3C"/>
    <property type="match status" value="1"/>
</dbReference>
<dbReference type="Pfam" id="PF00297">
    <property type="entry name" value="Ribosomal_L3"/>
    <property type="match status" value="1"/>
</dbReference>
<dbReference type="SUPFAM" id="SSF50447">
    <property type="entry name" value="Translation proteins"/>
    <property type="match status" value="1"/>
</dbReference>
<dbReference type="PROSITE" id="PS00474">
    <property type="entry name" value="RIBOSOMAL_L3"/>
    <property type="match status" value="1"/>
</dbReference>